<keyword id="KW-0217">Developmental protein</keyword>
<keyword id="KW-0238">DNA-binding</keyword>
<keyword id="KW-0539">Nucleus</keyword>
<keyword id="KW-0677">Repeat</keyword>
<keyword id="KW-0804">Transcription</keyword>
<keyword id="KW-0805">Transcription regulation</keyword>
<gene>
    <name type="primary">BBM1</name>
</gene>
<evidence type="ECO:0000255" key="1">
    <source>
        <dbReference type="PROSITE-ProRule" id="PRU00366"/>
    </source>
</evidence>
<evidence type="ECO:0000256" key="2">
    <source>
        <dbReference type="SAM" id="MobiDB-lite"/>
    </source>
</evidence>
<evidence type="ECO:0000269" key="3">
    <source>
    </source>
</evidence>
<evidence type="ECO:0000305" key="4"/>
<reference key="1">
    <citation type="journal article" date="2002" name="Plant Cell">
        <title>Ectopic expression of BABY BOOM triggers a conversion from vegetative to embryonic growth.</title>
        <authorList>
            <person name="Boutilier K."/>
            <person name="Offringa R."/>
            <person name="Sharma V.K."/>
            <person name="Kieft H."/>
            <person name="Ouellet T."/>
            <person name="Zhang L."/>
            <person name="Hattori J."/>
            <person name="Liu C.-M."/>
            <person name="Van Lammeren A.A.M."/>
            <person name="Miki B.L.A."/>
            <person name="Custers J.B.M."/>
            <person name="Van Lookeren Campagne M.M."/>
        </authorList>
    </citation>
    <scope>NUCLEOTIDE SEQUENCE [GENOMIC DNA / MRNA]</scope>
    <scope>FUNCTION</scope>
    <scope>TISSUE SPECIFICITY</scope>
    <scope>DEVELOPMENTAL STAGE</scope>
    <source>
        <strain>cv. Topas</strain>
    </source>
</reference>
<dbReference type="EMBL" id="AF317904">
    <property type="protein sequence ID" value="AAM33800.1"/>
    <property type="molecule type" value="mRNA"/>
</dbReference>
<dbReference type="EMBL" id="AF317906">
    <property type="protein sequence ID" value="AAM33802.1"/>
    <property type="molecule type" value="Genomic_DNA"/>
</dbReference>
<dbReference type="RefSeq" id="NP_001302749.1">
    <property type="nucleotide sequence ID" value="NM_001315820.1"/>
</dbReference>
<dbReference type="SMR" id="Q8L3U3"/>
<dbReference type="GeneID" id="106426170"/>
<dbReference type="KEGG" id="bna:106426170"/>
<dbReference type="OrthoDB" id="207175at2759"/>
<dbReference type="GO" id="GO:0005634">
    <property type="term" value="C:nucleus"/>
    <property type="evidence" value="ECO:0007669"/>
    <property type="project" value="UniProtKB-SubCell"/>
</dbReference>
<dbReference type="GO" id="GO:0003677">
    <property type="term" value="F:DNA binding"/>
    <property type="evidence" value="ECO:0007669"/>
    <property type="project" value="UniProtKB-KW"/>
</dbReference>
<dbReference type="GO" id="GO:0003700">
    <property type="term" value="F:DNA-binding transcription factor activity"/>
    <property type="evidence" value="ECO:0007669"/>
    <property type="project" value="InterPro"/>
</dbReference>
<dbReference type="CDD" id="cd00018">
    <property type="entry name" value="AP2"/>
    <property type="match status" value="2"/>
</dbReference>
<dbReference type="FunFam" id="3.30.730.10:FF:000002">
    <property type="entry name" value="AP2-like ethylene-responsive transcription factor"/>
    <property type="match status" value="1"/>
</dbReference>
<dbReference type="FunFam" id="3.30.730.10:FF:000003">
    <property type="entry name" value="AP2-like ethylene-responsive transcription factor ANT"/>
    <property type="match status" value="1"/>
</dbReference>
<dbReference type="Gene3D" id="3.30.730.10">
    <property type="entry name" value="AP2/ERF domain"/>
    <property type="match status" value="2"/>
</dbReference>
<dbReference type="InterPro" id="IPR001471">
    <property type="entry name" value="AP2/ERF_dom"/>
</dbReference>
<dbReference type="InterPro" id="IPR036955">
    <property type="entry name" value="AP2/ERF_dom_sf"/>
</dbReference>
<dbReference type="InterPro" id="IPR016177">
    <property type="entry name" value="DNA-bd_dom_sf"/>
</dbReference>
<dbReference type="PANTHER" id="PTHR32467">
    <property type="entry name" value="AP2-LIKE ETHYLENE-RESPONSIVE TRANSCRIPTION FACTOR"/>
    <property type="match status" value="1"/>
</dbReference>
<dbReference type="PANTHER" id="PTHR32467:SF72">
    <property type="entry name" value="AP2-LIKE ETHYLENE-RESPONSIVE TRANSCRIPTION FACTOR BBM"/>
    <property type="match status" value="1"/>
</dbReference>
<dbReference type="Pfam" id="PF00847">
    <property type="entry name" value="AP2"/>
    <property type="match status" value="2"/>
</dbReference>
<dbReference type="PRINTS" id="PR00367">
    <property type="entry name" value="ETHRSPELEMNT"/>
</dbReference>
<dbReference type="SMART" id="SM00380">
    <property type="entry name" value="AP2"/>
    <property type="match status" value="2"/>
</dbReference>
<dbReference type="SUPFAM" id="SSF54171">
    <property type="entry name" value="DNA-binding domain"/>
    <property type="match status" value="2"/>
</dbReference>
<dbReference type="PROSITE" id="PS51032">
    <property type="entry name" value="AP2_ERF"/>
    <property type="match status" value="2"/>
</dbReference>
<accession>Q8L3U3</accession>
<proteinExistence type="evidence at transcript level"/>
<feature type="chain" id="PRO_0000112526" description="AP2-like ethylene-responsive transcription factor BBM1">
    <location>
        <begin position="1"/>
        <end position="579"/>
    </location>
</feature>
<feature type="DNA-binding region" description="AP2/ERF 1" evidence="1">
    <location>
        <begin position="210"/>
        <end position="276"/>
    </location>
</feature>
<feature type="DNA-binding region" description="AP2/ERF 2" evidence="1">
    <location>
        <begin position="312"/>
        <end position="370"/>
    </location>
</feature>
<feature type="region of interest" description="Disordered" evidence="2">
    <location>
        <begin position="149"/>
        <end position="177"/>
    </location>
</feature>
<feature type="compositionally biased region" description="Low complexity" evidence="2">
    <location>
        <begin position="165"/>
        <end position="177"/>
    </location>
</feature>
<organism>
    <name type="scientific">Brassica napus</name>
    <name type="common">Rape</name>
    <dbReference type="NCBI Taxonomy" id="3708"/>
    <lineage>
        <taxon>Eukaryota</taxon>
        <taxon>Viridiplantae</taxon>
        <taxon>Streptophyta</taxon>
        <taxon>Embryophyta</taxon>
        <taxon>Tracheophyta</taxon>
        <taxon>Spermatophyta</taxon>
        <taxon>Magnoliopsida</taxon>
        <taxon>eudicotyledons</taxon>
        <taxon>Gunneridae</taxon>
        <taxon>Pentapetalae</taxon>
        <taxon>rosids</taxon>
        <taxon>malvids</taxon>
        <taxon>Brassicales</taxon>
        <taxon>Brassicaceae</taxon>
        <taxon>Brassiceae</taxon>
        <taxon>Brassica</taxon>
    </lineage>
</organism>
<sequence length="579" mass="63963">MNNNWLGFSLSPYEQNHHRKDVYSSTTTTVVDVAGEYCYDPTAASDESSAIQTSFPSPFGVVVDAFTRDNNSHSRDWDINGCACNNIHNDEQDGPKLENFLGRTTTIYNTNENVGDGSGSGCYGGGDGGGGSLGLSMIKTWLRNQPVDNVDNQENGNAAKGLSLSMNSSTSCDNNNDSNNNVVAQGKTIDDSVEATPKKTIESFGQRTSIYRGVTRHRWTGRYEAHLWDNSCKREGQTRKGRQVYLGGYDKEEKAARAYDLAALKYWGTTTTTNFPMSEYEKEVEEMKHMTRQEYVASLRRKSSGFSRGASIYRGVTRHHQHGRWQARIGRVAGNKDLYLGTFGTQEEAAEAYDIAAIKFRGLTAVTNFDMNRYNVKAILESPSLPIGSAAKRLKEANRPVPSMMMISNNVSESENSASGWQNAAVQHHQGVDLSLLHQHQERYNGYYYNGGNLSSESARACFKQEDDQHHFLSNTQSLMTNIDHQSSVSDDSVTVCGNVVGYGGYQGFAAPVNCDAYAASEFDYNARNHYYFAQQQQTQQSPGGDFPAAMTNNVGSNMYYHGEGGGEVAPTFTVWNDN</sequence>
<name>BBM1_BRANA</name>
<comment type="function">
    <text evidence="3">Transcription factor that promotes cell proliferation, differentiation and morphogenesis, especially during embryogenesis.</text>
</comment>
<comment type="subcellular location">
    <subcellularLocation>
        <location evidence="4">Nucleus</location>
    </subcellularLocation>
</comment>
<comment type="tissue specificity">
    <text evidence="3">Mostly expressed in developing seeds.</text>
</comment>
<comment type="developmental stage">
    <text evidence="3">Expressed in embryo throughout embryogenesis. Also present in free nuclear endosperm, but disappears once endosperm cellularization begins.</text>
</comment>
<protein>
    <recommendedName>
        <fullName>AP2-like ethylene-responsive transcription factor BBM1</fullName>
        <shortName>BnBBM1</shortName>
    </recommendedName>
    <alternativeName>
        <fullName>Protein BABY BOOM 1</fullName>
    </alternativeName>
</protein>